<dbReference type="EMBL" id="CP000458">
    <property type="protein sequence ID" value="ABK07553.1"/>
    <property type="molecule type" value="Genomic_DNA"/>
</dbReference>
<dbReference type="RefSeq" id="WP_006476798.1">
    <property type="nucleotide sequence ID" value="NC_008542.1"/>
</dbReference>
<dbReference type="SMR" id="A0K4X6"/>
<dbReference type="KEGG" id="bch:Bcen2424_0800"/>
<dbReference type="HOGENOM" id="CLU_047123_0_0_4"/>
<dbReference type="GO" id="GO:0042597">
    <property type="term" value="C:periplasmic space"/>
    <property type="evidence" value="ECO:0007669"/>
    <property type="project" value="UniProtKB-SubCell"/>
</dbReference>
<dbReference type="GO" id="GO:0051301">
    <property type="term" value="P:cell division"/>
    <property type="evidence" value="ECO:0007669"/>
    <property type="project" value="UniProtKB-UniRule"/>
</dbReference>
<dbReference type="GO" id="GO:0017038">
    <property type="term" value="P:protein import"/>
    <property type="evidence" value="ECO:0007669"/>
    <property type="project" value="InterPro"/>
</dbReference>
<dbReference type="Gene3D" id="2.120.10.30">
    <property type="entry name" value="TolB, C-terminal domain"/>
    <property type="match status" value="1"/>
</dbReference>
<dbReference type="Gene3D" id="3.40.50.10070">
    <property type="entry name" value="TolB, N-terminal domain"/>
    <property type="match status" value="1"/>
</dbReference>
<dbReference type="HAMAP" id="MF_00671">
    <property type="entry name" value="TolB"/>
    <property type="match status" value="1"/>
</dbReference>
<dbReference type="InterPro" id="IPR011042">
    <property type="entry name" value="6-blade_b-propeller_TolB-like"/>
</dbReference>
<dbReference type="InterPro" id="IPR011659">
    <property type="entry name" value="PD40"/>
</dbReference>
<dbReference type="InterPro" id="IPR014167">
    <property type="entry name" value="Tol-Pal_TolB"/>
</dbReference>
<dbReference type="InterPro" id="IPR007195">
    <property type="entry name" value="TolB_N"/>
</dbReference>
<dbReference type="NCBIfam" id="TIGR02800">
    <property type="entry name" value="propeller_TolB"/>
    <property type="match status" value="1"/>
</dbReference>
<dbReference type="PANTHER" id="PTHR36842:SF1">
    <property type="entry name" value="PROTEIN TOLB"/>
    <property type="match status" value="1"/>
</dbReference>
<dbReference type="PANTHER" id="PTHR36842">
    <property type="entry name" value="PROTEIN TOLB HOMOLOG"/>
    <property type="match status" value="1"/>
</dbReference>
<dbReference type="Pfam" id="PF07676">
    <property type="entry name" value="PD40"/>
    <property type="match status" value="5"/>
</dbReference>
<dbReference type="Pfam" id="PF04052">
    <property type="entry name" value="TolB_N"/>
    <property type="match status" value="1"/>
</dbReference>
<dbReference type="SUPFAM" id="SSF52964">
    <property type="entry name" value="TolB, N-terminal domain"/>
    <property type="match status" value="1"/>
</dbReference>
<dbReference type="SUPFAM" id="SSF69304">
    <property type="entry name" value="Tricorn protease N-terminal domain"/>
    <property type="match status" value="1"/>
</dbReference>
<protein>
    <recommendedName>
        <fullName evidence="1">Tol-Pal system protein TolB</fullName>
    </recommendedName>
</protein>
<proteinExistence type="inferred from homology"/>
<gene>
    <name evidence="1" type="primary">tolB</name>
    <name type="ordered locus">Bcen2424_0800</name>
</gene>
<accession>A0K4X6</accession>
<evidence type="ECO:0000255" key="1">
    <source>
        <dbReference type="HAMAP-Rule" id="MF_00671"/>
    </source>
</evidence>
<evidence type="ECO:0000256" key="2">
    <source>
        <dbReference type="SAM" id="MobiDB-lite"/>
    </source>
</evidence>
<keyword id="KW-0131">Cell cycle</keyword>
<keyword id="KW-0132">Cell division</keyword>
<keyword id="KW-0574">Periplasm</keyword>
<keyword id="KW-0732">Signal</keyword>
<feature type="signal peptide" evidence="1">
    <location>
        <begin position="1"/>
        <end position="26"/>
    </location>
</feature>
<feature type="chain" id="PRO_5000164641" description="Tol-Pal system protein TolB" evidence="1">
    <location>
        <begin position="27"/>
        <end position="431"/>
    </location>
</feature>
<feature type="region of interest" description="Disordered" evidence="2">
    <location>
        <begin position="406"/>
        <end position="431"/>
    </location>
</feature>
<reference key="1">
    <citation type="submission" date="2006-08" db="EMBL/GenBank/DDBJ databases">
        <title>Complete sequence of chromosome 1 of Burkholderia cenocepacia HI2424.</title>
        <authorList>
            <person name="Copeland A."/>
            <person name="Lucas S."/>
            <person name="Lapidus A."/>
            <person name="Barry K."/>
            <person name="Detter J.C."/>
            <person name="Glavina del Rio T."/>
            <person name="Hammon N."/>
            <person name="Israni S."/>
            <person name="Pitluck S."/>
            <person name="Chain P."/>
            <person name="Malfatti S."/>
            <person name="Shin M."/>
            <person name="Vergez L."/>
            <person name="Schmutz J."/>
            <person name="Larimer F."/>
            <person name="Land M."/>
            <person name="Hauser L."/>
            <person name="Kyrpides N."/>
            <person name="Kim E."/>
            <person name="LiPuma J.J."/>
            <person name="Gonzalez C.F."/>
            <person name="Konstantinidis K."/>
            <person name="Tiedje J.M."/>
            <person name="Richardson P."/>
        </authorList>
    </citation>
    <scope>NUCLEOTIDE SEQUENCE [LARGE SCALE GENOMIC DNA]</scope>
    <source>
        <strain>HI2424</strain>
    </source>
</reference>
<name>TOLB_BURCH</name>
<sequence>MSLMTKLGFRALVASCLITAGSAANAQVNVLITGVGSTQFPIATANFTNEANLPQQVTSIVRADLARSGKFTNIDAGSTPVPETASVDLGAWKAKGANAFVAGSVNRDANGQYKVNFILYDTVKQQSLGGLSLTATDTTLRTAGHKIADYIYQKLLGVRGVFATRLSYVIKTGNRYQLQISDSDGQNARIALSSTEPIISPAWSPSGTKVAYVSFERKKPIVYIHDLPTGRRYMVSDQKGNNSAPAWSPDSNTLAVALSLTGNTQIYTVNANGGGLRRLTQSSSIDTEPFYSPDGRWIYFTSDRGGAPQIYRMPAQGESAGAAQRVTFTGSYNTSPRVSPDGKLLAYISRTGGGFKLYVQDLQTGAANAITNTNRDESPSFAANGQYVLYATQSGGRNVLAAVPSDGSAPPQILSVQGGSVREPSWGPFMQ</sequence>
<organism>
    <name type="scientific">Burkholderia cenocepacia (strain HI2424)</name>
    <dbReference type="NCBI Taxonomy" id="331272"/>
    <lineage>
        <taxon>Bacteria</taxon>
        <taxon>Pseudomonadati</taxon>
        <taxon>Pseudomonadota</taxon>
        <taxon>Betaproteobacteria</taxon>
        <taxon>Burkholderiales</taxon>
        <taxon>Burkholderiaceae</taxon>
        <taxon>Burkholderia</taxon>
        <taxon>Burkholderia cepacia complex</taxon>
    </lineage>
</organism>
<comment type="function">
    <text evidence="1">Part of the Tol-Pal system, which plays a role in outer membrane invagination during cell division and is important for maintaining outer membrane integrity.</text>
</comment>
<comment type="subunit">
    <text evidence="1">The Tol-Pal system is composed of five core proteins: the inner membrane proteins TolA, TolQ and TolR, the periplasmic protein TolB and the outer membrane protein Pal. They form a network linking the inner and outer membranes and the peptidoglycan layer.</text>
</comment>
<comment type="subcellular location">
    <subcellularLocation>
        <location evidence="1">Periplasm</location>
    </subcellularLocation>
</comment>
<comment type="similarity">
    <text evidence="1">Belongs to the TolB family.</text>
</comment>